<comment type="similarity">
    <text evidence="1">Belongs to the SDO1/SBDS family.</text>
</comment>
<evidence type="ECO:0000305" key="1"/>
<feature type="chain" id="PRO_0000123767" description="Ribosome maturation protein SDO1 homolog">
    <location>
        <begin position="1"/>
        <end position="233"/>
    </location>
</feature>
<gene>
    <name type="ordered locus">APE_1167.1</name>
</gene>
<proteinExistence type="inferred from homology"/>
<name>SDO1_AERPE</name>
<protein>
    <recommendedName>
        <fullName>Ribosome maturation protein SDO1 homolog</fullName>
    </recommendedName>
</protein>
<dbReference type="EMBL" id="BA000002">
    <property type="protein sequence ID" value="BAA80152.2"/>
    <property type="molecule type" value="Genomic_DNA"/>
</dbReference>
<dbReference type="PIR" id="B72587">
    <property type="entry name" value="B72587"/>
</dbReference>
<dbReference type="RefSeq" id="WP_010866199.1">
    <property type="nucleotide sequence ID" value="NC_000854.2"/>
</dbReference>
<dbReference type="SMR" id="Q9YCU5"/>
<dbReference type="STRING" id="272557.APE_1167.1"/>
<dbReference type="EnsemblBacteria" id="BAA80152">
    <property type="protein sequence ID" value="BAA80152"/>
    <property type="gene ID" value="APE_1167.1"/>
</dbReference>
<dbReference type="GeneID" id="1445826"/>
<dbReference type="KEGG" id="ape:APE_1167.1"/>
<dbReference type="PATRIC" id="fig|272557.25.peg.801"/>
<dbReference type="eggNOG" id="arCOG04187">
    <property type="taxonomic scope" value="Archaea"/>
</dbReference>
<dbReference type="Proteomes" id="UP000002518">
    <property type="component" value="Chromosome"/>
</dbReference>
<dbReference type="GO" id="GO:0042256">
    <property type="term" value="P:cytosolic ribosome assembly"/>
    <property type="evidence" value="ECO:0007669"/>
    <property type="project" value="InterPro"/>
</dbReference>
<dbReference type="Gene3D" id="3.30.70.240">
    <property type="match status" value="1"/>
</dbReference>
<dbReference type="Gene3D" id="3.30.1250.10">
    <property type="entry name" value="Ribosome maturation protein SBDS, N-terminal domain"/>
    <property type="match status" value="1"/>
</dbReference>
<dbReference type="Gene3D" id="1.10.10.900">
    <property type="entry name" value="SBDS protein C-terminal domain, subdomain 1"/>
    <property type="match status" value="1"/>
</dbReference>
<dbReference type="InterPro" id="IPR035647">
    <property type="entry name" value="EFG_III/V"/>
</dbReference>
<dbReference type="InterPro" id="IPR018023">
    <property type="entry name" value="Ribosome_mat_SBDS_CS"/>
</dbReference>
<dbReference type="InterPro" id="IPR036786">
    <property type="entry name" value="Ribosome_mat_SBDS_N_sf"/>
</dbReference>
<dbReference type="InterPro" id="IPR002140">
    <property type="entry name" value="Sdo1/SBDS"/>
</dbReference>
<dbReference type="InterPro" id="IPR039100">
    <property type="entry name" value="Sdo1/SBDS-like"/>
</dbReference>
<dbReference type="InterPro" id="IPR046928">
    <property type="entry name" value="SDO1/SBDS_C"/>
</dbReference>
<dbReference type="InterPro" id="IPR018978">
    <property type="entry name" value="SDO1/SBDS_central"/>
</dbReference>
<dbReference type="InterPro" id="IPR037188">
    <property type="entry name" value="Sdo1/SBDS_central_sf"/>
</dbReference>
<dbReference type="InterPro" id="IPR019783">
    <property type="entry name" value="SDO1/SBDS_N"/>
</dbReference>
<dbReference type="NCBIfam" id="TIGR00291">
    <property type="entry name" value="RNA_SBDS"/>
    <property type="match status" value="1"/>
</dbReference>
<dbReference type="PANTHER" id="PTHR10927">
    <property type="entry name" value="RIBOSOME MATURATION PROTEIN SBDS"/>
    <property type="match status" value="1"/>
</dbReference>
<dbReference type="PANTHER" id="PTHR10927:SF4">
    <property type="entry name" value="RIBOSOME MATURATION PROTEIN SDO1 HOMOLOG"/>
    <property type="match status" value="1"/>
</dbReference>
<dbReference type="Pfam" id="PF20268">
    <property type="entry name" value="SBDS_C"/>
    <property type="match status" value="1"/>
</dbReference>
<dbReference type="Pfam" id="PF09377">
    <property type="entry name" value="SBDS_domain_II"/>
    <property type="match status" value="1"/>
</dbReference>
<dbReference type="Pfam" id="PF01172">
    <property type="entry name" value="SBDS_N"/>
    <property type="match status" value="1"/>
</dbReference>
<dbReference type="SUPFAM" id="SSF54980">
    <property type="entry name" value="EF-G C-terminal domain-like"/>
    <property type="match status" value="1"/>
</dbReference>
<dbReference type="SUPFAM" id="SSF89895">
    <property type="entry name" value="FYSH domain"/>
    <property type="match status" value="1"/>
</dbReference>
<dbReference type="SUPFAM" id="SSF109728">
    <property type="entry name" value="Hypothetical protein AF0491, middle domain"/>
    <property type="match status" value="1"/>
</dbReference>
<dbReference type="PROSITE" id="PS01267">
    <property type="entry name" value="UPF0023"/>
    <property type="match status" value="1"/>
</dbReference>
<organism>
    <name type="scientific">Aeropyrum pernix (strain ATCC 700893 / DSM 11879 / JCM 9820 / NBRC 100138 / K1)</name>
    <dbReference type="NCBI Taxonomy" id="272557"/>
    <lineage>
        <taxon>Archaea</taxon>
        <taxon>Thermoproteota</taxon>
        <taxon>Thermoprotei</taxon>
        <taxon>Desulfurococcales</taxon>
        <taxon>Desulfurococcaceae</taxon>
        <taxon>Aeropyrum</taxon>
    </lineage>
</organism>
<keyword id="KW-1185">Reference proteome</keyword>
<sequence length="233" mass="26587">MSKRQDYIVAWMEVRGKRFEILVRPELAFRYKEKGDVDLEDVLWTDTIYRDVRKGLKASPEEVKKAFGTSDPRRVAEKILKEGEIQLTEEQRRRLLEAKRRQIISYIARNAIDPTTGRPIPEARIEAALEEVRFPINLWRDAESQAVEAVRLIARVMPIRLARALLEVKIPPPHSGRAYQALMRMGEVKKADWLPDGSLKAELEIPAGAQVEVTSRIQALARGAAEVKVKKVA</sequence>
<accession>Q9YCU5</accession>
<reference key="1">
    <citation type="journal article" date="1999" name="DNA Res.">
        <title>Complete genome sequence of an aerobic hyper-thermophilic crenarchaeon, Aeropyrum pernix K1.</title>
        <authorList>
            <person name="Kawarabayasi Y."/>
            <person name="Hino Y."/>
            <person name="Horikawa H."/>
            <person name="Yamazaki S."/>
            <person name="Haikawa Y."/>
            <person name="Jin-no K."/>
            <person name="Takahashi M."/>
            <person name="Sekine M."/>
            <person name="Baba S."/>
            <person name="Ankai A."/>
            <person name="Kosugi H."/>
            <person name="Hosoyama A."/>
            <person name="Fukui S."/>
            <person name="Nagai Y."/>
            <person name="Nishijima K."/>
            <person name="Nakazawa H."/>
            <person name="Takamiya M."/>
            <person name="Masuda S."/>
            <person name="Funahashi T."/>
            <person name="Tanaka T."/>
            <person name="Kudoh Y."/>
            <person name="Yamazaki J."/>
            <person name="Kushida N."/>
            <person name="Oguchi A."/>
            <person name="Aoki K."/>
            <person name="Kubota K."/>
            <person name="Nakamura Y."/>
            <person name="Nomura N."/>
            <person name="Sako Y."/>
            <person name="Kikuchi H."/>
        </authorList>
    </citation>
    <scope>NUCLEOTIDE SEQUENCE [LARGE SCALE GENOMIC DNA]</scope>
    <source>
        <strain>ATCC 700893 / DSM 11879 / JCM 9820 / NBRC 100138 / K1</strain>
    </source>
</reference>